<feature type="chain" id="PRO_0000362835" description="NAD(P)H-quinone oxidoreductase subunit 3, chloroplastic">
    <location>
        <begin position="1"/>
        <end position="120"/>
    </location>
</feature>
<feature type="transmembrane region" description="Helical" evidence="1">
    <location>
        <begin position="9"/>
        <end position="29"/>
    </location>
</feature>
<feature type="transmembrane region" description="Helical" evidence="1">
    <location>
        <begin position="64"/>
        <end position="84"/>
    </location>
</feature>
<feature type="transmembrane region" description="Helical" evidence="1">
    <location>
        <begin position="88"/>
        <end position="108"/>
    </location>
</feature>
<gene>
    <name evidence="1" type="primary">ndhC</name>
</gene>
<accession>Q2L912</accession>
<sequence length="120" mass="13854">MFLLYEYDIFWAFLIISSAIPILAFLISGVLAPIRKGPEKLSSYESGIEPMGDAWLQFRIRYYMFALVFVVFDVETVFLYPWAMSFDVLGVPVFIEAFIFVLILIVGSVYAWRKGALEWS</sequence>
<evidence type="ECO:0000255" key="1">
    <source>
        <dbReference type="HAMAP-Rule" id="MF_01394"/>
    </source>
</evidence>
<reference key="1">
    <citation type="journal article" date="2006" name="BMC Genomics">
        <title>The complete chloroplast genome sequence of Gossypium hirsutum: organization and phylogenetic relationships to other angiosperms.</title>
        <authorList>
            <person name="Lee S.-B."/>
            <person name="Kaittanis C."/>
            <person name="Jansen R.K."/>
            <person name="Hostetler J.B."/>
            <person name="Tallon L.J."/>
            <person name="Town C.D."/>
            <person name="Daniell H."/>
        </authorList>
    </citation>
    <scope>NUCLEOTIDE SEQUENCE [LARGE SCALE GENOMIC DNA]</scope>
    <source>
        <strain>cv. Coker 310FR</strain>
    </source>
</reference>
<comment type="function">
    <text evidence="1">NDH shuttles electrons from NAD(P)H:plastoquinone, via FMN and iron-sulfur (Fe-S) centers, to quinones in the photosynthetic chain and possibly in a chloroplast respiratory chain. The immediate electron acceptor for the enzyme in this species is believed to be plastoquinone. Couples the redox reaction to proton translocation, and thus conserves the redox energy in a proton gradient.</text>
</comment>
<comment type="catalytic activity">
    <reaction evidence="1">
        <text>a plastoquinone + NADH + (n+1) H(+)(in) = a plastoquinol + NAD(+) + n H(+)(out)</text>
        <dbReference type="Rhea" id="RHEA:42608"/>
        <dbReference type="Rhea" id="RHEA-COMP:9561"/>
        <dbReference type="Rhea" id="RHEA-COMP:9562"/>
        <dbReference type="ChEBI" id="CHEBI:15378"/>
        <dbReference type="ChEBI" id="CHEBI:17757"/>
        <dbReference type="ChEBI" id="CHEBI:57540"/>
        <dbReference type="ChEBI" id="CHEBI:57945"/>
        <dbReference type="ChEBI" id="CHEBI:62192"/>
    </reaction>
</comment>
<comment type="catalytic activity">
    <reaction evidence="1">
        <text>a plastoquinone + NADPH + (n+1) H(+)(in) = a plastoquinol + NADP(+) + n H(+)(out)</text>
        <dbReference type="Rhea" id="RHEA:42612"/>
        <dbReference type="Rhea" id="RHEA-COMP:9561"/>
        <dbReference type="Rhea" id="RHEA-COMP:9562"/>
        <dbReference type="ChEBI" id="CHEBI:15378"/>
        <dbReference type="ChEBI" id="CHEBI:17757"/>
        <dbReference type="ChEBI" id="CHEBI:57783"/>
        <dbReference type="ChEBI" id="CHEBI:58349"/>
        <dbReference type="ChEBI" id="CHEBI:62192"/>
    </reaction>
</comment>
<comment type="subunit">
    <text evidence="1">NDH is composed of at least 16 different subunits, 5 of which are encoded in the nucleus.</text>
</comment>
<comment type="subcellular location">
    <subcellularLocation>
        <location evidence="1">Plastid</location>
        <location evidence="1">Chloroplast thylakoid membrane</location>
        <topology evidence="1">Multi-pass membrane protein</topology>
    </subcellularLocation>
</comment>
<comment type="similarity">
    <text evidence="1">Belongs to the complex I subunit 3 family.</text>
</comment>
<proteinExistence type="inferred from homology"/>
<keyword id="KW-0150">Chloroplast</keyword>
<keyword id="KW-0472">Membrane</keyword>
<keyword id="KW-0520">NAD</keyword>
<keyword id="KW-0521">NADP</keyword>
<keyword id="KW-0934">Plastid</keyword>
<keyword id="KW-0618">Plastoquinone</keyword>
<keyword id="KW-0874">Quinone</keyword>
<keyword id="KW-1185">Reference proteome</keyword>
<keyword id="KW-0793">Thylakoid</keyword>
<keyword id="KW-1278">Translocase</keyword>
<keyword id="KW-0812">Transmembrane</keyword>
<keyword id="KW-1133">Transmembrane helix</keyword>
<keyword id="KW-0813">Transport</keyword>
<organism>
    <name type="scientific">Gossypium hirsutum</name>
    <name type="common">Upland cotton</name>
    <name type="synonym">Gossypium mexicanum</name>
    <dbReference type="NCBI Taxonomy" id="3635"/>
    <lineage>
        <taxon>Eukaryota</taxon>
        <taxon>Viridiplantae</taxon>
        <taxon>Streptophyta</taxon>
        <taxon>Embryophyta</taxon>
        <taxon>Tracheophyta</taxon>
        <taxon>Spermatophyta</taxon>
        <taxon>Magnoliopsida</taxon>
        <taxon>eudicotyledons</taxon>
        <taxon>Gunneridae</taxon>
        <taxon>Pentapetalae</taxon>
        <taxon>rosids</taxon>
        <taxon>malvids</taxon>
        <taxon>Malvales</taxon>
        <taxon>Malvaceae</taxon>
        <taxon>Malvoideae</taxon>
        <taxon>Gossypium</taxon>
    </lineage>
</organism>
<geneLocation type="chloroplast"/>
<name>NU3C_GOSHI</name>
<dbReference type="EC" id="7.1.1.-" evidence="1"/>
<dbReference type="EMBL" id="DQ345959">
    <property type="protein sequence ID" value="ABC73633.1"/>
    <property type="molecule type" value="Genomic_DNA"/>
</dbReference>
<dbReference type="RefSeq" id="YP_538940.1">
    <property type="nucleotide sequence ID" value="NC_007944.1"/>
</dbReference>
<dbReference type="SMR" id="Q2L912"/>
<dbReference type="GeneID" id="3989152"/>
<dbReference type="KEGG" id="ghi:3989152"/>
<dbReference type="OrthoDB" id="15769at41938"/>
<dbReference type="Proteomes" id="UP000189702">
    <property type="component" value="Chloroplast Pltd"/>
</dbReference>
<dbReference type="GO" id="GO:0009535">
    <property type="term" value="C:chloroplast thylakoid membrane"/>
    <property type="evidence" value="ECO:0007669"/>
    <property type="project" value="UniProtKB-SubCell"/>
</dbReference>
<dbReference type="GO" id="GO:0030964">
    <property type="term" value="C:NADH dehydrogenase complex"/>
    <property type="evidence" value="ECO:0000318"/>
    <property type="project" value="GO_Central"/>
</dbReference>
<dbReference type="GO" id="GO:0008137">
    <property type="term" value="F:NADH dehydrogenase (ubiquinone) activity"/>
    <property type="evidence" value="ECO:0000318"/>
    <property type="project" value="GO_Central"/>
</dbReference>
<dbReference type="GO" id="GO:0048038">
    <property type="term" value="F:quinone binding"/>
    <property type="evidence" value="ECO:0007669"/>
    <property type="project" value="UniProtKB-KW"/>
</dbReference>
<dbReference type="GO" id="GO:0019684">
    <property type="term" value="P:photosynthesis, light reaction"/>
    <property type="evidence" value="ECO:0007669"/>
    <property type="project" value="UniProtKB-UniRule"/>
</dbReference>
<dbReference type="FunFam" id="1.20.58.1610:FF:000001">
    <property type="entry name" value="NAD(P)H-quinone oxidoreductase subunit 3, chloroplastic"/>
    <property type="match status" value="1"/>
</dbReference>
<dbReference type="Gene3D" id="1.20.58.1610">
    <property type="entry name" value="NADH:ubiquinone/plastoquinone oxidoreductase, chain 3"/>
    <property type="match status" value="1"/>
</dbReference>
<dbReference type="HAMAP" id="MF_01394">
    <property type="entry name" value="NDH1_NuoA"/>
    <property type="match status" value="1"/>
</dbReference>
<dbReference type="InterPro" id="IPR023043">
    <property type="entry name" value="NAD(P)H_OxRDtase_bac/plastid"/>
</dbReference>
<dbReference type="InterPro" id="IPR000440">
    <property type="entry name" value="NADH_UbQ/plastoQ_OxRdtase_su3"/>
</dbReference>
<dbReference type="InterPro" id="IPR038430">
    <property type="entry name" value="NDAH_ubi_oxred_su3_sf"/>
</dbReference>
<dbReference type="PANTHER" id="PTHR11058">
    <property type="entry name" value="NADH-UBIQUINONE OXIDOREDUCTASE CHAIN 3"/>
    <property type="match status" value="1"/>
</dbReference>
<dbReference type="PANTHER" id="PTHR11058:SF9">
    <property type="entry name" value="NADH-UBIQUINONE OXIDOREDUCTASE CHAIN 3"/>
    <property type="match status" value="1"/>
</dbReference>
<dbReference type="Pfam" id="PF00507">
    <property type="entry name" value="Oxidored_q4"/>
    <property type="match status" value="1"/>
</dbReference>
<protein>
    <recommendedName>
        <fullName evidence="1">NAD(P)H-quinone oxidoreductase subunit 3, chloroplastic</fullName>
        <ecNumber evidence="1">7.1.1.-</ecNumber>
    </recommendedName>
    <alternativeName>
        <fullName evidence="1">NAD(P)H dehydrogenase subunit 3</fullName>
    </alternativeName>
    <alternativeName>
        <fullName evidence="1">NADH-plastoquinone oxidoreductase subunit 3</fullName>
    </alternativeName>
</protein>